<accession>E9Q7G0</accession>
<accession>Q80Y35</accession>
<sequence length="2094" mass="235630">MTLHATRAATLLSWVNSLHVADPVETVLQLQDCSIFIKIINTIHDTKEGQQILQQPLPERLDFVCSFLQKNRKHPSSTQCLVSVQKVIEGSEMELAKMIMLFLYQSTMSSRNLRDWEQFEYGVQAELAVILKFMLDHEESLNLTEDLESFLEKVPYTHASTLSEELSPPSHQTKRKIRFLEIQRIASSSSENNFLSGSPSSPMGDILQTPQFQMRRLKKQLADERSNRDDLELELSESLKLLTEKDAQIAMMQQRIDHLALLNEKQAASSQEPSELEELRGKNESLTVRLHETLKQCQNLKTEKSQMDRKISQLSEENGDLSFKVREFANHLQQLQGAFNDLIEEHSKASQEWAEKQARLENELSTALQDKKCLEEKNEILQGKLSQLEDQATRLQESPAPEKGEVLGDALQLDTLKQEAAKLATDNTQLQTRVETLECERGKQEAQLLAERSRFEDEKQQLASLIADLQSSVSNLSQAKEELEQASQAQGAQLTAQLTSMTGLNATLQQRDQELASLKEQAKKEQAQMLQTMQEQEQAAQGLRQQVEQLSSSLKLKEQQLEEAAKEQEATRQDHAQQLAIVAEAREASLRERDTARQQLETVEKEKDAKLESLQQQLQAANDARDNAQTSVTQAQQEKAELSQKIGELHACIEASHQEQRQVQARVTELEAQLKAEQQKTTEREKVVQEKAQLQEQLRALEESLKITKGSLEEEKRRAADALKEQQCRATEMEAESRSLMEQREREQKELEQEKAGRKGLEARIQQLEEAHQAETEALRHELAEATASQHRAESECERLIREVESRQKRFEARQQEEARYGAMFQEQLMALKGEKTGQEVQEEAVEIHSEGQPGQQQSQLAQLHASLAKAIQQVQEKEVRAQKLVDDLSALQEKMAATNKEVACLKTLVLKAGEQQETASLELLKEPPRAANRASDQLGEQQGRPFSSTHAAVKAMEREAEQMGGELERLRAALIKSQGQQQEERGQQEREVARLTQERGQAQADLAQEKAAKAELEMRLQNTLNEQRVEFAALQEALAHALTEKEGTDQELAKLRGQEAAQRTELKELQQTLEQLKIQLVKKEKEHPAGGASGEDASGPGTQSETAGKTDAPGPELQALRAEISKLEQQCQQQQQQVEGLTHSLKSERACRAEQDKALETLQGQLEEKARELGHNQAASASAQRELQALRAKAQDHSKAEEEWKAQVARGQQEAERKSSLISSLEEEVSILNRQVLEKEGESKELKRLVVAESEKSQKLEERLRLLQVETASNSARAAERSSALREEVQSLREEVEKQRVVSENSRQELASQAERAEELGQELKAWQEKFFQKEQALSALQLEHTSTQALVSELLPAKHLCQQLQAEQAAAEKRFREELEQSKQAAGGLQAELMRAQRELGELGSLRQKIVEQERAAQQLRAEKASYAEQLSMLKKAHGLLAEENRGLGERANLGRQFLEVELDQAREKYVQELAAVRTDAETHLAEMRQEAQSTSRELEVMTAKYEGAKVKVLEERQRFQEERQKLTAQVEELSKKLTEHDQASKVQQQKLKAFQAQRGESQQEVQRLQTQLNELQAQLSQKEQAAEHYKLQMEKAKTHYDAKKQQNQKLQEQLQDLEELQKENKELRSEAERLGRELQQAGLKTKEAEQTCRHLTAQVRSLEAQVAHADQQLRDLGKFQVATDALKSREPQVKPQLDLSIDSLDLSLEEGTPCSVASKLPRTQPDGTSVPGEPASPISQRLPPKVESLESLYFTPTPARGQAPLETSLDSLGDAFPDSGRKTRSARRRTTQIINITMTKKLELEEPDSANSSFYSTQSAPASQANLRATSSTQSLARLGSPDDGNSALLSLPGYRPTTRSSARRSQARMSSGAPQGRNSFYMGTCQDEPEQLDDWNRIAELQQRNRVCPPHLKTCYPLESRPTLSLATITDEEMKTGDPRETLRRASMQPAQIAEGVGITTRQQRKRVSSETHQGPGTPESKKATSCFPRPMTPRDRHEGRKQSSTADTQKKAAPVLKQADRRQSMAFSILNTPKKLGNSLLRRGASKKTPAKVSPNPRSGTRRSPRIATTTTGTATVATTPRAKGKVKH</sequence>
<feature type="chain" id="PRO_0000440879" description="Nuclear mitotic apparatus protein 1">
    <location>
        <begin position="1"/>
        <end position="2094"/>
    </location>
</feature>
<feature type="region of interest" description="Head (Globular)" evidence="1">
    <location>
        <begin position="1"/>
        <end position="210"/>
    </location>
</feature>
<feature type="region of interest" description="Disordered" evidence="3">
    <location>
        <begin position="617"/>
        <end position="636"/>
    </location>
</feature>
<feature type="region of interest" description="Disordered" evidence="3">
    <location>
        <begin position="723"/>
        <end position="759"/>
    </location>
</feature>
<feature type="region of interest" description="Disordered" evidence="3">
    <location>
        <begin position="921"/>
        <end position="1000"/>
    </location>
</feature>
<feature type="region of interest" description="Disordered" evidence="3">
    <location>
        <begin position="1081"/>
        <end position="1143"/>
    </location>
</feature>
<feature type="region of interest" description="Disordered" evidence="3">
    <location>
        <begin position="1173"/>
        <end position="1223"/>
    </location>
</feature>
<feature type="region of interest" description="Membrane-binding domain 1" evidence="1">
    <location>
        <begin position="1681"/>
        <end position="1858"/>
    </location>
</feature>
<feature type="region of interest" description="Tail (Globular)" evidence="1">
    <location>
        <begin position="1682"/>
        <end position="2094"/>
    </location>
</feature>
<feature type="region of interest" description="Disordered" evidence="3">
    <location>
        <begin position="1718"/>
        <end position="1743"/>
    </location>
</feature>
<feature type="region of interest" description="Disordered" evidence="3">
    <location>
        <begin position="1760"/>
        <end position="1795"/>
    </location>
</feature>
<feature type="region of interest" description="4.1-binding domain" evidence="1">
    <location>
        <begin position="1770"/>
        <end position="1792"/>
    </location>
</feature>
<feature type="region of interest" description="Disordered" evidence="3">
    <location>
        <begin position="1807"/>
        <end position="1883"/>
    </location>
</feature>
<feature type="region of interest" description="Tubulin-binding domain" evidence="1">
    <location>
        <begin position="1864"/>
        <end position="1967"/>
    </location>
</feature>
<feature type="region of interest" description="GPSM2-binding domain" evidence="1">
    <location>
        <begin position="1874"/>
        <end position="1908"/>
    </location>
</feature>
<feature type="region of interest" description="Disordered" evidence="3">
    <location>
        <begin position="1937"/>
        <end position="2094"/>
    </location>
</feature>
<feature type="region of interest" description="Membrane-binding domain 2" evidence="1">
    <location>
        <begin position="1963"/>
        <end position="2042"/>
    </location>
</feature>
<feature type="coiled-coil region" evidence="2">
    <location>
        <begin position="211"/>
        <end position="1681"/>
    </location>
</feature>
<feature type="short sequence motif" description="Tankyrase-binding domain" evidence="1">
    <location>
        <begin position="1724"/>
        <end position="1730"/>
    </location>
</feature>
<feature type="short sequence motif" description="Nuclear localization signal" evidence="1">
    <location>
        <begin position="1966"/>
        <end position="1971"/>
    </location>
</feature>
<feature type="compositionally biased region" description="Polar residues" evidence="3">
    <location>
        <begin position="627"/>
        <end position="636"/>
    </location>
</feature>
<feature type="compositionally biased region" description="Polar residues" evidence="3">
    <location>
        <begin position="935"/>
        <end position="951"/>
    </location>
</feature>
<feature type="compositionally biased region" description="Basic and acidic residues" evidence="3">
    <location>
        <begin position="956"/>
        <end position="972"/>
    </location>
</feature>
<feature type="compositionally biased region" description="Basic and acidic residues" evidence="3">
    <location>
        <begin position="983"/>
        <end position="998"/>
    </location>
</feature>
<feature type="compositionally biased region" description="Basic and acidic residues" evidence="3">
    <location>
        <begin position="1194"/>
        <end position="1206"/>
    </location>
</feature>
<feature type="compositionally biased region" description="Polar residues" evidence="3">
    <location>
        <begin position="1812"/>
        <end position="1839"/>
    </location>
</feature>
<feature type="compositionally biased region" description="Basic and acidic residues" evidence="3">
    <location>
        <begin position="1937"/>
        <end position="1948"/>
    </location>
</feature>
<feature type="compositionally biased region" description="Basic and acidic residues" evidence="3">
    <location>
        <begin position="1997"/>
        <end position="2006"/>
    </location>
</feature>
<feature type="compositionally biased region" description="Low complexity" evidence="3">
    <location>
        <begin position="2073"/>
        <end position="2085"/>
    </location>
</feature>
<feature type="modified residue" description="Phosphoserine" evidence="1">
    <location>
        <position position="160"/>
    </location>
</feature>
<feature type="modified residue" description="Phosphothreonine" evidence="1">
    <location>
        <position position="161"/>
    </location>
</feature>
<feature type="modified residue" description="Phosphoserine" evidence="1">
    <location>
        <position position="167"/>
    </location>
</feature>
<feature type="modified residue" description="Phosphoserine" evidence="1">
    <location>
        <position position="201"/>
    </location>
</feature>
<feature type="modified residue" description="Phosphothreonine" evidence="1">
    <location>
        <position position="209"/>
    </location>
</feature>
<feature type="modified residue" description="Phosphoserine" evidence="1">
    <location>
        <position position="269"/>
    </location>
</feature>
<feature type="modified residue" description="N6-acetyllysine" evidence="1">
    <location>
        <position position="377"/>
    </location>
</feature>
<feature type="modified residue" description="Phosphoserine" evidence="1">
    <location>
        <position position="386"/>
    </location>
</feature>
<feature type="modified residue" description="Phosphoserine" evidence="11 12 13">
    <location>
        <position position="398"/>
    </location>
</feature>
<feature type="modified residue" description="N6-acetyllysine" evidence="14">
    <location>
        <position position="443"/>
    </location>
</feature>
<feature type="modified residue" description="N6-acetyllysine" evidence="1">
    <location>
        <position position="878"/>
    </location>
</feature>
<feature type="modified residue" description="Phosphoserine" evidence="1">
    <location>
        <position position="1183"/>
    </location>
</feature>
<feature type="modified residue" description="Phosphoserine" evidence="1">
    <location>
        <position position="1221"/>
    </location>
</feature>
<feature type="modified residue" description="N6-acetyllysine" evidence="1">
    <location>
        <position position="1507"/>
    </location>
</feature>
<feature type="modified residue" description="Phosphoserine" evidence="1">
    <location>
        <position position="1583"/>
    </location>
</feature>
<feature type="modified residue" description="Phosphoserine" evidence="13">
    <location>
        <position position="1703"/>
    </location>
</feature>
<feature type="modified residue" description="Phosphoserine" evidence="13">
    <location>
        <position position="1706"/>
    </location>
</feature>
<feature type="modified residue" description="Phosphoserine" evidence="1">
    <location>
        <position position="1710"/>
    </location>
</feature>
<feature type="modified residue" description="Phosphoserine" evidence="11 12 13">
    <location>
        <position position="1739"/>
    </location>
</feature>
<feature type="modified residue" description="Phosphoserine" evidence="1">
    <location>
        <position position="1742"/>
    </location>
</feature>
<feature type="modified residue" description="Phosphoserine" evidence="13">
    <location>
        <position position="1751"/>
    </location>
</feature>
<feature type="modified residue" description="Phosphoserine; by PLK1" evidence="1">
    <location>
        <position position="1754"/>
    </location>
</feature>
<feature type="modified residue" description="Phosphotyrosine" evidence="1">
    <location>
        <position position="1756"/>
    </location>
</feature>
<feature type="modified residue" description="Phosphothreonine" evidence="1">
    <location>
        <position position="1758"/>
    </location>
</feature>
<feature type="modified residue" description="Phosphoserine; by PLK1" evidence="1">
    <location>
        <position position="1771"/>
    </location>
</feature>
<feature type="modified residue" description="Phosphoserine" evidence="1">
    <location>
        <position position="1774"/>
    </location>
</feature>
<feature type="modified residue" description="Phosphoserine" evidence="13">
    <location>
        <position position="1782"/>
    </location>
</feature>
<feature type="modified residue" description="Phosphothreonine" evidence="1">
    <location>
        <position position="1786"/>
    </location>
</feature>
<feature type="modified residue" description="Phosphoserine" evidence="1">
    <location>
        <position position="1812"/>
    </location>
</feature>
<feature type="modified residue" description="Phosphoserine" evidence="1">
    <location>
        <position position="1815"/>
    </location>
</feature>
<feature type="modified residue" description="Phosphoserine; by PLK1" evidence="1">
    <location>
        <position position="1816"/>
    </location>
</feature>
<feature type="modified residue" description="Phosphotyrosine" evidence="1">
    <location>
        <position position="1818"/>
    </location>
</feature>
<feature type="modified residue" description="Phosphoserine" evidence="1">
    <location>
        <position position="1822"/>
    </location>
</feature>
<feature type="modified residue" description="Phosphoserine; alternate" evidence="1">
    <location>
        <position position="1826"/>
    </location>
</feature>
<feature type="modified residue" description="Phosphoserine" evidence="12">
    <location>
        <position position="1844"/>
    </location>
</feature>
<feature type="modified residue" description="Phosphoserine" evidence="1">
    <location>
        <position position="1869"/>
    </location>
</feature>
<feature type="modified residue" description="Phosphoserine" evidence="13">
    <location>
        <position position="1951"/>
    </location>
</feature>
<feature type="modified residue" description="Phosphoserine" evidence="1">
    <location>
        <position position="1973"/>
    </location>
</feature>
<feature type="modified residue" description="Phosphoserine" evidence="13">
    <location>
        <position position="1974"/>
    </location>
</feature>
<feature type="modified residue" description="Phosphothreonine" evidence="1">
    <location>
        <position position="1982"/>
    </location>
</feature>
<feature type="modified residue" description="Phosphoserine" evidence="1">
    <location>
        <position position="1985"/>
    </location>
</feature>
<feature type="modified residue" description="Phosphothreonine; by CDK1" evidence="1">
    <location>
        <position position="1997"/>
    </location>
</feature>
<feature type="modified residue" description="Phosphoserine" evidence="13">
    <location>
        <position position="2029"/>
    </location>
</feature>
<feature type="modified residue" description="Phosphothreonine" evidence="13">
    <location>
        <position position="2037"/>
    </location>
</feature>
<feature type="modified residue" description="Phosphoserine" evidence="1">
    <location>
        <position position="2044"/>
    </location>
</feature>
<feature type="modified residue" description="Phosphoserine" evidence="1">
    <location>
        <position position="2059"/>
    </location>
</feature>
<feature type="modified residue" description="Phosphoserine; by CDK1" evidence="1">
    <location>
        <position position="2069"/>
    </location>
</feature>
<feature type="modified residue" description="Phosphothreonine; by CDK1" evidence="1">
    <location>
        <position position="2085"/>
    </location>
</feature>
<feature type="glycosylation site" description="O-linked (GlcNAc) serine; alternate" evidence="1">
    <location>
        <position position="1826"/>
    </location>
</feature>
<feature type="cross-link" description="Glycyl lysine isopeptide (Lys-Gly) (interchain with G-Cter in SUMO2)" evidence="1">
    <location>
        <position position="1681"/>
    </location>
</feature>
<feature type="cross-link" description="Glycyl lysine isopeptide (Lys-Gly) (interchain with G-Cter in SUMO1); alternate" evidence="1">
    <location>
        <position position="1748"/>
    </location>
</feature>
<feature type="cross-link" description="Glycyl lysine isopeptide (Lys-Gly) (interchain with G-Cter in SUMO2); alternate" evidence="1">
    <location>
        <position position="1748"/>
    </location>
</feature>
<feature type="cross-link" description="Glycyl lysine isopeptide (Lys-Gly) (interchain with G-Cter in SUMO2)" evidence="1">
    <location>
        <position position="1804"/>
    </location>
</feature>
<feature type="sequence conflict" description="In Ref. 2; AAH49791." evidence="9" ref="2">
    <original>A</original>
    <variation>V</variation>
    <location>
        <position position="539"/>
    </location>
</feature>
<gene>
    <name evidence="10" type="primary">Numa1</name>
</gene>
<organism>
    <name type="scientific">Mus musculus</name>
    <name type="common">Mouse</name>
    <dbReference type="NCBI Taxonomy" id="10090"/>
    <lineage>
        <taxon>Eukaryota</taxon>
        <taxon>Metazoa</taxon>
        <taxon>Chordata</taxon>
        <taxon>Craniata</taxon>
        <taxon>Vertebrata</taxon>
        <taxon>Euteleostomi</taxon>
        <taxon>Mammalia</taxon>
        <taxon>Eutheria</taxon>
        <taxon>Euarchontoglires</taxon>
        <taxon>Glires</taxon>
        <taxon>Rodentia</taxon>
        <taxon>Myomorpha</taxon>
        <taxon>Muroidea</taxon>
        <taxon>Muridae</taxon>
        <taxon>Murinae</taxon>
        <taxon>Mus</taxon>
        <taxon>Mus</taxon>
    </lineage>
</organism>
<comment type="function">
    <text evidence="1 4 5 7">Microtubule (MT)-binding protein that plays a role in the formation and maintenance of the spindle poles and the alignement and the segregation of chromosomes during mitotic cell division (PubMed:19255246, PubMed:24109598, PubMed:26765568). Functions to tether the minus ends of MTs at the spindle poles, which is critical for the establishment and maintenance of the spindle poles (PubMed:26765568). Plays a role in the establishment of the mitotic spindle orientation during metaphase and elongation during anaphase in a dynein-dynactin-dependent manner (PubMed:26765568). In metaphase, part of a ternary complex composed of GPSM2 and G(i) alpha proteins, that regulates the recruitment and anchorage of the dynein-dynactin complex in the mitotic cell cortex regions situated above the two spindle poles, and hence regulates the correct oritentation of the mitotic spindle (PubMed:24109598, PubMed:26765568). During anaphase, mediates the recruitment and accumulation of the dynein-dynactin complex at the cell membrane of the polar cortical region through direct association with phosphatidylinositol 4,5-bisphosphate (PI(4,5)P2), and hence participates in the regulation of the spindle elongation and chromosome segregation. Also binds to other polyanionic phosphoinositides, such as phosphatidylinositol 3-phosphate (PIP), lysophosphatidic acid (LPA) and phosphatidylinositol triphosphate (PIP3), in vitro (By similarity). Also required for proper orientation of the mitotic spindle during asymmetric cell divisions (PubMed:26765568). Plays a role in mitotic MT aster assembly. Involved in anastral spindle assembly. Positively regulates TNKS protein localization to spindle poles in mitosis. Highly abundant component of the nuclear matrix where it may serve a non-mitotic structural role, occupies the majority of the nuclear volume (By similarity). Required for epidermal differentiation and hair follicle morphogenesis (PubMed:26765568).</text>
</comment>
<comment type="subunit">
    <text evidence="1 6">Homodimer. Also forms multiarm oligomers by association of C-terminal tail domains, oligomers may further assemble to form a hexagonal nuclear lattice-like network. Associates with the dynein-dynactin complex; this association promotes the transport and accumulation of NUMA1 at the mitotic spindle poles that is inhibited by the BRISC complex in a PLK1-dependent manner. Part of a spindle orientation complex at least composed of GNAI1, GPSM2 and NUMA1 (By similarity). Interacts (via C-terminus) with microtubules (MTs); this interaction is direct and promotes both MT bundle formation and stability in a dynein-dynactin complex- and CDK1-independent manner. Interacts with EPB41 and EPB41L2; these interactions are negatively regulated by CDK1 during metaphase and are important for anaphase-specific localization of NUMA1 in symmetrically dividing cells. Interacts (via C-terminus) with GPSM2 (via TPR repeats); this interaction is direct, prevented by competitive binding of INSC, is inhibited in a PLK1-dependent manner, blocks the association of NUMA1 with MTs and inhibits NUMA1-induced MT bundle formation, prevents the association of NUMA1 with SPAG5, induces mitotic spindle pole localization of GPSM2, both metaphase cell cortex localization of NUMA1 and mitotic spindle organization. Does not interact with GPSM2 during anaphase. Interacts (via C-terminus) with the nuclear importin alpha/importin beta receptor; this interaction is inhibited by RanGTP. Interacts (via C-terminus) with KPNB1; this interaction is inhibited by RanGTP and the BRISC complex. Interacts with ABRAXAS2 and the BRISC complex; these interactions regulate mitotic spindle assembly. Interacts (via N-terminal end of the coiled-coil domain) with RAE1; this interaction promotes mitotic spindle formation. Interacts (via C-terminus) with SPAG5 (via C-terminus); this interaction promotes the recruitment of SPAG5 to the MTs at spindle poles in a dynein-dynactin-dependent manner and regulates mitotic spindle organization and proper chromosome alignment during mitosis. Interacts with TNKS; this interaction occurs at the onset of mitosis. Interacts with TNKS2. Interacts with tubulin. Interacts with KHDC3 (via C-terminus) (PubMed:25936915).</text>
</comment>
<comment type="subcellular location">
    <subcellularLocation>
        <location evidence="4">Nucleus</location>
    </subcellularLocation>
    <subcellularLocation>
        <location evidence="1">Nucleus</location>
        <location evidence="1">Nucleoplasm</location>
    </subcellularLocation>
    <subcellularLocation>
        <location evidence="1">Nucleus matrix</location>
    </subcellularLocation>
    <subcellularLocation>
        <location evidence="1">Chromosome</location>
    </subcellularLocation>
    <subcellularLocation>
        <location evidence="7">Cytoplasm</location>
        <location evidence="7">Cytoskeleton</location>
    </subcellularLocation>
    <subcellularLocation>
        <location evidence="1">Cytoplasm</location>
        <location evidence="1">Cytoskeleton</location>
        <location evidence="1">Microtubule organizing center</location>
        <location evidence="1">Centrosome</location>
    </subcellularLocation>
    <subcellularLocation>
        <location evidence="4 5 7">Cytoplasm</location>
        <location evidence="4 5 7">Cytoskeleton</location>
        <location evidence="4 5 7">Spindle pole</location>
    </subcellularLocation>
    <subcellularLocation>
        <location evidence="5 7 8">Cytoplasm</location>
        <location evidence="5 7 8">Cell cortex</location>
    </subcellularLocation>
    <subcellularLocation>
        <location evidence="1">Cell membrane</location>
        <topology evidence="1">Lipid-anchor</topology>
        <orientation evidence="1">Cytoplasmic side</orientation>
    </subcellularLocation>
    <subcellularLocation>
        <location evidence="8">Lateral cell membrane</location>
    </subcellularLocation>
    <text evidence="1 4 5 7 8">Mitotic cell cycle-dependent shuttling protein that relocalizes from the interphase nucleus to the spindle poles and cell cortex (PubMed:19255246, PubMed:24109598, PubMed:26765568). The localization to the spindle poles is regulated by AAAS (By similarity). In interphase, resides in the nuclear matrix (PubMed:19255246). In prophase, restricted to the interchromatin or condensed chromosome space. In prometaphase, after nuclear envelope disassembly, forms aggregates both in the spindle midzone and at duplicated centrosomes and astral microtubules (MTs) of the bipolar spindle apparatus. Translocates from the spindle midzone towards the spindle poles along spindle fibers in a MT- and dynein-dynactin-dependent manner until the anaphase onset (By similarity). In metaphase, recruited to the polar cortical region in a GPSM2- and GNAI1-dependent manner (PubMed:24109598). Excluded from the metaphase equatorial cortical region in a RanGTP-dependent manner. Phosphorylation on Thr-2037 by CDK1 results in its localization at spindle poles in metaphase, but not at the cell cortex (By similarity). In anaphase, recruited and anchored at the cell membrane of the polar cortical region in a EPB41-, EPB41L2-, phosphatidylinositol-dependent and GPSM2- and G(i) alpha proteins-independent manner (PubMed:24109598). Excluded from the anaphase equatorial region of the cell cortex in a RACGAP1- and KIF23-dependent and RanGTP-independent manner. Associated with astral MTs emanating from the spindle poles during anaphase. Nonphosphorylated Thr-2037 localizes at the cell cortex, weakly during metaphase and more prominently during anaphase in a phosphatase PPP2CA-dependent manner. As mitosis progresses it reassociates with telophase chromosomes very early during nuclear reformation, before substantial accumulation of lamins on chromosomal surfaces is evident. Localizes to the tips of cortical MTs in prometaphase (By similarity). Localizes along MTs and specifically to both MT plus and minus ends (PubMed:26765568). Also accumulates at MT tips near the cell periphery. Colocalizes with GPSM2 at mitotic spindle poles during mitosis. Colocalizes with SPAG5 at mitotic spindle at prometaphase and at mitotic spindle poles at metaphase and anaphase. Colocalizes with ABRO1 at mitotic spindle poles. Colocalized with TNKS from prophase through to anaphase in mitosis. Colocalizes with tubulin alpha. CCSAP is essential for its centrosomal localization (By similarity). In horizontally retinal progenitor dividing cells, localized to the lateral cortical region (PubMed:26766442).</text>
</comment>
<comment type="tissue specificity">
    <text evidence="4">Expressed in testis, speen, liver, lung, spinal cord and brain. Expressed in Purkinje neurons (at protein level) (PubMed:19255246).</text>
</comment>
<comment type="domain">
    <text evidence="1">The C-terminal tubulin-binding domain mediates direct binding to microtubules, independently of dynein-dynactin complex, and induces their bundling and stabilization. The 4.1-binding domain is necessary for its cortical stability and spindle orientation.</text>
</comment>
<comment type="PTM">
    <text evidence="1">Phosphorylation and dephosphorylation on Thr-2037 regulates the extent of cortical NUMA1 and the dynein-dynactin complex localization during mitotic metaphase and anaphase. In metaphase, phosphorylation on Thr-2037 occurs in a kinase CDK1-dependent manner; this phosphorylation maintains low levels of cortical dynein-dynactin complex at metaphase, and hence proper spindle positioning. In anaphase, dephosphorylated on Thr-2037 by phosphatase PPP2CA; this dephosphorylation stimulates its membrane association and with the dynein-dynactin complex its enrichment at the cell cortex, and hence robust spindle elongation. Probably also phosphorylated on Thr-1997 and Ser-2069 by CDK1; these phosphorylations may regulate its cell cortex recruitment during metaphase and anaphase. Phosphorylated on Ser-1751, Ser-1754, Ser-1771 and Ser-1816 by PLK1; these phosphorylations induce cortical dynein-dynactin complex dissociation from the NUMA1-GPSM2 complex and negatively regulates cortical dynein-dynactin complex localization.</text>
</comment>
<comment type="PTM">
    <text evidence="1">ADP-ribosylated by TNKS at the onset of mitosis; ADP-ribosylation is not required for its localization to spindle poles.</text>
</comment>
<comment type="PTM">
    <text evidence="1">O-glycosylated during cytokinesis at sites identical or close to phosphorylation sites, this interferes with the phosphorylation status.</text>
</comment>
<comment type="PTM">
    <text evidence="1">Ubiquitinated with 'Lys-63'-linked polyubiquitin chains. Deubiquitination by the BRISC complex is important for the incorporation of NUMA1 into mitotic spindle poles and normal spindle pole function, probably by modulating interactions between NUMA1, dynein-dynactin complex and importin-beta.</text>
</comment>
<comment type="disruption phenotype">
    <text evidence="4 7">Mutant mice with an internal in-frame deletion of exon 22 exhibit early embryonic lethality (PubMed:19255246). Mutant mice with a conditional internal in-frame deletion of exon 22 show embryonic lethality and display inhibition of primary embryonic fibroblast proliferation that display mitotic centrosome-spindle coupling, microtubule-focusing at the spindle poles and equatorial metaphase chromosome alignement defects (PubMed:19255246). Mutant mice with a conditional internal in-frame deletion of exon 22 in the embryonic epidermis show neonatal lethality and display perturbation of epidermis differentiation characterized by increased suprabasal cell divisions and mitotic spindle orientation defects (PubMed:26765568). Adult mutant mice with a conditional internal in-frame deletion of exon 22 in interfollicular and hair follicles display an almost complete absence of hair regrowth and mitotic spindle orientation defects in hair follicle matrix cells (PubMed:26765568).</text>
</comment>
<dbReference type="EMBL" id="AC167240">
    <property type="status" value="NOT_ANNOTATED_CDS"/>
    <property type="molecule type" value="Genomic_DNA"/>
</dbReference>
<dbReference type="EMBL" id="BC049791">
    <property type="protein sequence ID" value="AAH49791.1"/>
    <property type="molecule type" value="mRNA"/>
</dbReference>
<dbReference type="CCDS" id="CCDS40046.1"/>
<dbReference type="RefSeq" id="NP_001390480.1">
    <property type="nucleotide sequence ID" value="NM_001403551.1"/>
</dbReference>
<dbReference type="RefSeq" id="NP_598708.3">
    <property type="nucleotide sequence ID" value="NM_133947.3"/>
</dbReference>
<dbReference type="RefSeq" id="XP_006507240.1">
    <property type="nucleotide sequence ID" value="XM_006507177.4"/>
</dbReference>
<dbReference type="RefSeq" id="XP_036008433.1">
    <property type="nucleotide sequence ID" value="XM_036152540.1"/>
</dbReference>
<dbReference type="RefSeq" id="XP_036008434.1">
    <property type="nucleotide sequence ID" value="XM_036152541.1"/>
</dbReference>
<dbReference type="RefSeq" id="XP_036008435.1">
    <property type="nucleotide sequence ID" value="XM_036152542.1"/>
</dbReference>
<dbReference type="SMR" id="E9Q7G0"/>
<dbReference type="FunCoup" id="E9Q7G0">
    <property type="interactions" value="2033"/>
</dbReference>
<dbReference type="IntAct" id="E9Q7G0">
    <property type="interactions" value="2"/>
</dbReference>
<dbReference type="STRING" id="10090.ENSMUSP00000081912"/>
<dbReference type="GlyCosmos" id="E9Q7G0">
    <property type="glycosylation" value="1 site, No reported glycans"/>
</dbReference>
<dbReference type="GlyGen" id="E9Q7G0">
    <property type="glycosylation" value="5 sites, 1 N-linked glycan (1 site), 1 O-linked glycan (3 sites)"/>
</dbReference>
<dbReference type="iPTMnet" id="E9Q7G0"/>
<dbReference type="PhosphoSitePlus" id="E9Q7G0"/>
<dbReference type="SwissPalm" id="E9Q7G0"/>
<dbReference type="jPOST" id="E9Q7G0"/>
<dbReference type="PaxDb" id="10090-ENSMUSP00000081912"/>
<dbReference type="PeptideAtlas" id="E9Q7G0"/>
<dbReference type="ProteomicsDB" id="287857"/>
<dbReference type="Pumba" id="E9Q7G0"/>
<dbReference type="Antibodypedia" id="16895">
    <property type="antibodies" value="434 antibodies from 38 providers"/>
</dbReference>
<dbReference type="DNASU" id="101706"/>
<dbReference type="Ensembl" id="ENSMUST00000084852.13">
    <property type="protein sequence ID" value="ENSMUSP00000081912.6"/>
    <property type="gene ID" value="ENSMUSG00000066306.14"/>
</dbReference>
<dbReference type="GeneID" id="101706"/>
<dbReference type="KEGG" id="mmu:101706"/>
<dbReference type="UCSC" id="uc009ipz.1">
    <property type="organism name" value="mouse"/>
</dbReference>
<dbReference type="AGR" id="MGI:2443665"/>
<dbReference type="CTD" id="4926"/>
<dbReference type="MGI" id="MGI:2443665">
    <property type="gene designation" value="Numa1"/>
</dbReference>
<dbReference type="VEuPathDB" id="HostDB:ENSMUSG00000066306"/>
<dbReference type="eggNOG" id="ENOG502QTDA">
    <property type="taxonomic scope" value="Eukaryota"/>
</dbReference>
<dbReference type="GeneTree" id="ENSGT00950000183078"/>
<dbReference type="HOGENOM" id="CLU_233598_0_0_1"/>
<dbReference type="InParanoid" id="E9Q7G0"/>
<dbReference type="OMA" id="EAFRQCQ"/>
<dbReference type="OrthoDB" id="2436455at2759"/>
<dbReference type="PhylomeDB" id="E9Q7G0"/>
<dbReference type="TreeFam" id="TF334442"/>
<dbReference type="Reactome" id="R-MMU-380320">
    <property type="pathway name" value="Recruitment of NuMA to mitotic centrosomes"/>
</dbReference>
<dbReference type="Reactome" id="R-MMU-68875">
    <property type="pathway name" value="Mitotic Prophase"/>
</dbReference>
<dbReference type="BioGRID-ORCS" id="101706">
    <property type="hits" value="24 hits in 80 CRISPR screens"/>
</dbReference>
<dbReference type="CD-CODE" id="01CA17F3">
    <property type="entry name" value="Centrosome"/>
</dbReference>
<dbReference type="ChiTaRS" id="Numa1">
    <property type="organism name" value="mouse"/>
</dbReference>
<dbReference type="PRO" id="PR:E9Q7G0"/>
<dbReference type="Proteomes" id="UP000000589">
    <property type="component" value="Chromosome 7"/>
</dbReference>
<dbReference type="RNAct" id="E9Q7G0">
    <property type="molecule type" value="protein"/>
</dbReference>
<dbReference type="Bgee" id="ENSMUSG00000066306">
    <property type="expression patterns" value="Expressed in undifferentiated genital tubercle and 266 other cell types or tissues"/>
</dbReference>
<dbReference type="ExpressionAtlas" id="E9Q7G0">
    <property type="expression patterns" value="baseline and differential"/>
</dbReference>
<dbReference type="GO" id="GO:0099738">
    <property type="term" value="C:cell cortex region"/>
    <property type="evidence" value="ECO:0000314"/>
    <property type="project" value="UniProtKB"/>
</dbReference>
<dbReference type="GO" id="GO:0005813">
    <property type="term" value="C:centrosome"/>
    <property type="evidence" value="ECO:0000250"/>
    <property type="project" value="UniProtKB"/>
</dbReference>
<dbReference type="GO" id="GO:0005694">
    <property type="term" value="C:chromosome"/>
    <property type="evidence" value="ECO:0007669"/>
    <property type="project" value="UniProtKB-SubCell"/>
</dbReference>
<dbReference type="GO" id="GO:0055028">
    <property type="term" value="C:cortical microtubule"/>
    <property type="evidence" value="ECO:0000250"/>
    <property type="project" value="UniProtKB"/>
</dbReference>
<dbReference type="GO" id="GO:1905720">
    <property type="term" value="C:cytoplasmic microtubule bundle"/>
    <property type="evidence" value="ECO:0000250"/>
    <property type="project" value="UniProtKB"/>
</dbReference>
<dbReference type="GO" id="GO:0005829">
    <property type="term" value="C:cytosol"/>
    <property type="evidence" value="ECO:0007669"/>
    <property type="project" value="Ensembl"/>
</dbReference>
<dbReference type="GO" id="GO:0030425">
    <property type="term" value="C:dendrite"/>
    <property type="evidence" value="ECO:0007669"/>
    <property type="project" value="Ensembl"/>
</dbReference>
<dbReference type="GO" id="GO:0097575">
    <property type="term" value="C:lateral cell cortex"/>
    <property type="evidence" value="ECO:0000315"/>
    <property type="project" value="UniProtKB"/>
</dbReference>
<dbReference type="GO" id="GO:0016328">
    <property type="term" value="C:lateral plasma membrane"/>
    <property type="evidence" value="ECO:0007669"/>
    <property type="project" value="UniProtKB-SubCell"/>
</dbReference>
<dbReference type="GO" id="GO:0097427">
    <property type="term" value="C:microtubule bundle"/>
    <property type="evidence" value="ECO:0000250"/>
    <property type="project" value="UniProtKB"/>
</dbReference>
<dbReference type="GO" id="GO:0036449">
    <property type="term" value="C:microtubule minus-end"/>
    <property type="evidence" value="ECO:0000250"/>
    <property type="project" value="UniProtKB"/>
</dbReference>
<dbReference type="GO" id="GO:0035371">
    <property type="term" value="C:microtubule plus-end"/>
    <property type="evidence" value="ECO:0000250"/>
    <property type="project" value="UniProtKB"/>
</dbReference>
<dbReference type="GO" id="GO:0061673">
    <property type="term" value="C:mitotic spindle astral microtubule"/>
    <property type="evidence" value="ECO:0000250"/>
    <property type="project" value="UniProtKB"/>
</dbReference>
<dbReference type="GO" id="GO:1990023">
    <property type="term" value="C:mitotic spindle midzone"/>
    <property type="evidence" value="ECO:0000250"/>
    <property type="project" value="UniProtKB"/>
</dbReference>
<dbReference type="GO" id="GO:0097431">
    <property type="term" value="C:mitotic spindle pole"/>
    <property type="evidence" value="ECO:0000314"/>
    <property type="project" value="UniProtKB"/>
</dbReference>
<dbReference type="GO" id="GO:0043025">
    <property type="term" value="C:neuronal cell body"/>
    <property type="evidence" value="ECO:0007669"/>
    <property type="project" value="Ensembl"/>
</dbReference>
<dbReference type="GO" id="GO:0016363">
    <property type="term" value="C:nuclear matrix"/>
    <property type="evidence" value="ECO:0000314"/>
    <property type="project" value="MGI"/>
</dbReference>
<dbReference type="GO" id="GO:0005654">
    <property type="term" value="C:nucleoplasm"/>
    <property type="evidence" value="ECO:0000250"/>
    <property type="project" value="UniProtKB"/>
</dbReference>
<dbReference type="GO" id="GO:0005634">
    <property type="term" value="C:nucleus"/>
    <property type="evidence" value="ECO:0000250"/>
    <property type="project" value="UniProtKB"/>
</dbReference>
<dbReference type="GO" id="GO:0005886">
    <property type="term" value="C:plasma membrane"/>
    <property type="evidence" value="ECO:0000250"/>
    <property type="project" value="UniProtKB"/>
</dbReference>
<dbReference type="GO" id="GO:0032991">
    <property type="term" value="C:protein-containing complex"/>
    <property type="evidence" value="ECO:0007669"/>
    <property type="project" value="Ensembl"/>
</dbReference>
<dbReference type="GO" id="GO:0005876">
    <property type="term" value="C:spindle microtubule"/>
    <property type="evidence" value="ECO:0000250"/>
    <property type="project" value="UniProtKB"/>
</dbReference>
<dbReference type="GO" id="GO:0000922">
    <property type="term" value="C:spindle pole"/>
    <property type="evidence" value="ECO:0000266"/>
    <property type="project" value="MGI"/>
</dbReference>
<dbReference type="GO" id="GO:0031616">
    <property type="term" value="C:spindle pole centrosome"/>
    <property type="evidence" value="ECO:0000250"/>
    <property type="project" value="UniProtKB"/>
</dbReference>
<dbReference type="GO" id="GO:0097718">
    <property type="term" value="F:disordered domain specific binding"/>
    <property type="evidence" value="ECO:0007669"/>
    <property type="project" value="Ensembl"/>
</dbReference>
<dbReference type="GO" id="GO:0070840">
    <property type="term" value="F:dynein complex binding"/>
    <property type="evidence" value="ECO:0000250"/>
    <property type="project" value="UniProtKB"/>
</dbReference>
<dbReference type="GO" id="GO:0008017">
    <property type="term" value="F:microtubule binding"/>
    <property type="evidence" value="ECO:0000250"/>
    <property type="project" value="UniProtKB"/>
</dbReference>
<dbReference type="GO" id="GO:0051011">
    <property type="term" value="F:microtubule minus-end binding"/>
    <property type="evidence" value="ECO:0000250"/>
    <property type="project" value="UniProtKB"/>
</dbReference>
<dbReference type="GO" id="GO:0051010">
    <property type="term" value="F:microtubule plus-end binding"/>
    <property type="evidence" value="ECO:0000250"/>
    <property type="project" value="UniProtKB"/>
</dbReference>
<dbReference type="GO" id="GO:0035091">
    <property type="term" value="F:phosphatidylinositol binding"/>
    <property type="evidence" value="ECO:0000250"/>
    <property type="project" value="UniProtKB"/>
</dbReference>
<dbReference type="GO" id="GO:0015631">
    <property type="term" value="F:tubulin binding"/>
    <property type="evidence" value="ECO:0000250"/>
    <property type="project" value="UniProtKB"/>
</dbReference>
<dbReference type="GO" id="GO:0055048">
    <property type="term" value="P:anastral spindle assembly"/>
    <property type="evidence" value="ECO:0007669"/>
    <property type="project" value="Ensembl"/>
</dbReference>
<dbReference type="GO" id="GO:0030953">
    <property type="term" value="P:astral microtubule organization"/>
    <property type="evidence" value="ECO:0000250"/>
    <property type="project" value="UniProtKB"/>
</dbReference>
<dbReference type="GO" id="GO:0051301">
    <property type="term" value="P:cell division"/>
    <property type="evidence" value="ECO:0007669"/>
    <property type="project" value="UniProtKB-KW"/>
</dbReference>
<dbReference type="GO" id="GO:0000132">
    <property type="term" value="P:establishment of mitotic spindle orientation"/>
    <property type="evidence" value="ECO:0000315"/>
    <property type="project" value="UniProtKB"/>
</dbReference>
<dbReference type="GO" id="GO:0051321">
    <property type="term" value="P:meiotic cell cycle"/>
    <property type="evidence" value="ECO:0007669"/>
    <property type="project" value="Ensembl"/>
</dbReference>
<dbReference type="GO" id="GO:0001578">
    <property type="term" value="P:microtubule bundle formation"/>
    <property type="evidence" value="ECO:0000250"/>
    <property type="project" value="UniProtKB"/>
</dbReference>
<dbReference type="GO" id="GO:0030513">
    <property type="term" value="P:positive regulation of BMP signaling pathway"/>
    <property type="evidence" value="ECO:0000315"/>
    <property type="project" value="UniProtKB"/>
</dbReference>
<dbReference type="GO" id="GO:0051984">
    <property type="term" value="P:positive regulation of chromosome segregation"/>
    <property type="evidence" value="ECO:0000250"/>
    <property type="project" value="UniProtKB"/>
</dbReference>
<dbReference type="GO" id="GO:1905820">
    <property type="term" value="P:positive regulation of chromosome separation"/>
    <property type="evidence" value="ECO:0007669"/>
    <property type="project" value="Ensembl"/>
</dbReference>
<dbReference type="GO" id="GO:0051798">
    <property type="term" value="P:positive regulation of hair follicle development"/>
    <property type="evidence" value="ECO:0000315"/>
    <property type="project" value="UniProtKB"/>
</dbReference>
<dbReference type="GO" id="GO:0032388">
    <property type="term" value="P:positive regulation of intracellular transport"/>
    <property type="evidence" value="ECO:0000250"/>
    <property type="project" value="UniProtKB"/>
</dbReference>
<dbReference type="GO" id="GO:0045618">
    <property type="term" value="P:positive regulation of keratinocyte differentiation"/>
    <property type="evidence" value="ECO:0000315"/>
    <property type="project" value="UniProtKB"/>
</dbReference>
<dbReference type="GO" id="GO:0031116">
    <property type="term" value="P:positive regulation of microtubule polymerization"/>
    <property type="evidence" value="ECO:0000250"/>
    <property type="project" value="UniProtKB"/>
</dbReference>
<dbReference type="GO" id="GO:1902846">
    <property type="term" value="P:positive regulation of mitotic spindle elongation"/>
    <property type="evidence" value="ECO:0007669"/>
    <property type="project" value="Ensembl"/>
</dbReference>
<dbReference type="GO" id="GO:1904778">
    <property type="term" value="P:positive regulation of protein localization to cell cortex"/>
    <property type="evidence" value="ECO:0000250"/>
    <property type="project" value="UniProtKB"/>
</dbReference>
<dbReference type="GO" id="GO:1902365">
    <property type="term" value="P:positive regulation of protein localization to spindle pole body"/>
    <property type="evidence" value="ECO:0000250"/>
    <property type="project" value="UniProtKB"/>
</dbReference>
<dbReference type="GO" id="GO:1905832">
    <property type="term" value="P:positive regulation of spindle assembly"/>
    <property type="evidence" value="ECO:0000250"/>
    <property type="project" value="UniProtKB"/>
</dbReference>
<dbReference type="GO" id="GO:0090235">
    <property type="term" value="P:regulation of metaphase plate congression"/>
    <property type="evidence" value="ECO:0000250"/>
    <property type="project" value="UniProtKB"/>
</dbReference>
<dbReference type="GO" id="GO:0060236">
    <property type="term" value="P:regulation of mitotic spindle organization"/>
    <property type="evidence" value="ECO:0000250"/>
    <property type="project" value="UniProtKB"/>
</dbReference>
<dbReference type="CDD" id="cd22224">
    <property type="entry name" value="HkD_NuMA"/>
    <property type="match status" value="1"/>
</dbReference>
<dbReference type="CDD" id="cd22298">
    <property type="entry name" value="NuMA_LGNBD"/>
    <property type="match status" value="1"/>
</dbReference>
<dbReference type="InterPro" id="IPR051841">
    <property type="entry name" value="MT-Golgi_org_protein"/>
</dbReference>
<dbReference type="InterPro" id="IPR048726">
    <property type="entry name" value="NuMA_LGNBD"/>
</dbReference>
<dbReference type="InterPro" id="IPR048724">
    <property type="entry name" value="NuMA_N_HOOK"/>
</dbReference>
<dbReference type="PANTHER" id="PTHR18902:SF24">
    <property type="entry name" value="NUCLEAR MITOTIC APPARATUS PROTEIN 1"/>
    <property type="match status" value="1"/>
</dbReference>
<dbReference type="PANTHER" id="PTHR18902">
    <property type="entry name" value="NUCLEAR MITOTIC APPARATUS PROTEIN 1-RELATED"/>
    <property type="match status" value="1"/>
</dbReference>
<dbReference type="Pfam" id="PF21670">
    <property type="entry name" value="HOOK_N_NuMA"/>
    <property type="match status" value="1"/>
</dbReference>
<dbReference type="SUPFAM" id="SSF116907">
    <property type="entry name" value="Hook domain"/>
    <property type="match status" value="1"/>
</dbReference>
<proteinExistence type="evidence at protein level"/>
<evidence type="ECO:0000250" key="1">
    <source>
        <dbReference type="UniProtKB" id="Q14980"/>
    </source>
</evidence>
<evidence type="ECO:0000255" key="2"/>
<evidence type="ECO:0000256" key="3">
    <source>
        <dbReference type="SAM" id="MobiDB-lite"/>
    </source>
</evidence>
<evidence type="ECO:0000269" key="4">
    <source>
    </source>
</evidence>
<evidence type="ECO:0000269" key="5">
    <source>
    </source>
</evidence>
<evidence type="ECO:0000269" key="6">
    <source>
    </source>
</evidence>
<evidence type="ECO:0000269" key="7">
    <source>
    </source>
</evidence>
<evidence type="ECO:0000269" key="8">
    <source>
    </source>
</evidence>
<evidence type="ECO:0000305" key="9"/>
<evidence type="ECO:0000312" key="10">
    <source>
        <dbReference type="MGI" id="MGI:2443665"/>
    </source>
</evidence>
<evidence type="ECO:0007744" key="11">
    <source>
    </source>
</evidence>
<evidence type="ECO:0007744" key="12">
    <source>
    </source>
</evidence>
<evidence type="ECO:0007744" key="13">
    <source>
    </source>
</evidence>
<evidence type="ECO:0007744" key="14">
    <source>
    </source>
</evidence>
<reference key="1">
    <citation type="journal article" date="2009" name="PLoS Biol.">
        <title>Lineage-specific biology revealed by a finished genome assembly of the mouse.</title>
        <authorList>
            <person name="Church D.M."/>
            <person name="Goodstadt L."/>
            <person name="Hillier L.W."/>
            <person name="Zody M.C."/>
            <person name="Goldstein S."/>
            <person name="She X."/>
            <person name="Bult C.J."/>
            <person name="Agarwala R."/>
            <person name="Cherry J.L."/>
            <person name="DiCuccio M."/>
            <person name="Hlavina W."/>
            <person name="Kapustin Y."/>
            <person name="Meric P."/>
            <person name="Maglott D."/>
            <person name="Birtle Z."/>
            <person name="Marques A.C."/>
            <person name="Graves T."/>
            <person name="Zhou S."/>
            <person name="Teague B."/>
            <person name="Potamousis K."/>
            <person name="Churas C."/>
            <person name="Place M."/>
            <person name="Herschleb J."/>
            <person name="Runnheim R."/>
            <person name="Forrest D."/>
            <person name="Amos-Landgraf J."/>
            <person name="Schwartz D.C."/>
            <person name="Cheng Z."/>
            <person name="Lindblad-Toh K."/>
            <person name="Eichler E.E."/>
            <person name="Ponting C.P."/>
        </authorList>
    </citation>
    <scope>NUCLEOTIDE SEQUENCE [LARGE SCALE GENOMIC DNA]</scope>
    <source>
        <strain>C57BL/6J</strain>
    </source>
</reference>
<reference key="2">
    <citation type="journal article" date="2004" name="Genome Res.">
        <title>The status, quality, and expansion of the NIH full-length cDNA project: the Mammalian Gene Collection (MGC).</title>
        <authorList>
            <consortium name="The MGC Project Team"/>
        </authorList>
    </citation>
    <scope>NUCLEOTIDE SEQUENCE [LARGE SCALE MRNA]</scope>
    <source>
        <tissue>Limb</tissue>
    </source>
</reference>
<reference key="3">
    <citation type="journal article" date="2007" name="Proc. Natl. Acad. Sci. U.S.A.">
        <title>Large-scale phosphorylation analysis of mouse liver.</title>
        <authorList>
            <person name="Villen J."/>
            <person name="Beausoleil S.A."/>
            <person name="Gerber S.A."/>
            <person name="Gygi S.P."/>
        </authorList>
    </citation>
    <scope>PHOSPHORYLATION [LARGE SCALE ANALYSIS] AT SER-398 AND SER-1739</scope>
    <scope>IDENTIFICATION BY MASS SPECTROMETRY [LARGE SCALE ANALYSIS]</scope>
    <source>
        <tissue>Liver</tissue>
    </source>
</reference>
<reference key="4">
    <citation type="journal article" date="2009" name="Immunity">
        <title>The phagosomal proteome in interferon-gamma-activated macrophages.</title>
        <authorList>
            <person name="Trost M."/>
            <person name="English L."/>
            <person name="Lemieux S."/>
            <person name="Courcelles M."/>
            <person name="Desjardins M."/>
            <person name="Thibault P."/>
        </authorList>
    </citation>
    <scope>PHOSPHORYLATION [LARGE SCALE ANALYSIS] AT SER-398; SER-1739 AND SER-1844</scope>
    <scope>IDENTIFICATION BY MASS SPECTROMETRY [LARGE SCALE ANALYSIS]</scope>
</reference>
<reference key="5">
    <citation type="journal article" date="2009" name="J. Cell Biol.">
        <title>Requirements for NuMA in maintenance and establishment of mammalian spindle poles.</title>
        <authorList>
            <person name="Silk A.D."/>
            <person name="Holland A.J."/>
            <person name="Cleveland D.W."/>
        </authorList>
    </citation>
    <scope>FUNCTION</scope>
    <scope>SUBCELLULAR LOCATION</scope>
    <scope>TISSUE SPECIFICITY</scope>
    <scope>DISRUPTION PHENOTYPE</scope>
</reference>
<reference key="6">
    <citation type="journal article" date="2010" name="Cell">
        <title>A tissue-specific atlas of mouse protein phosphorylation and expression.</title>
        <authorList>
            <person name="Huttlin E.L."/>
            <person name="Jedrychowski M.P."/>
            <person name="Elias J.E."/>
            <person name="Goswami T."/>
            <person name="Rad R."/>
            <person name="Beausoleil S.A."/>
            <person name="Villen J."/>
            <person name="Haas W."/>
            <person name="Sowa M.E."/>
            <person name="Gygi S.P."/>
        </authorList>
    </citation>
    <scope>PHOSPHORYLATION [LARGE SCALE ANALYSIS] AT SER-398; SER-1703; SER-1706; SER-1739; SER-1751; SER-1782; SER-1951; SER-1974; SER-2029 AND THR-2037</scope>
    <scope>IDENTIFICATION BY MASS SPECTROMETRY [LARGE SCALE ANALYSIS]</scope>
    <source>
        <tissue>Brain</tissue>
        <tissue>Brown adipose tissue</tissue>
        <tissue>Heart</tissue>
        <tissue>Kidney</tissue>
        <tissue>Liver</tissue>
        <tissue>Lung</tissue>
        <tissue>Pancreas</tissue>
        <tissue>Spleen</tissue>
        <tissue>Testis</tissue>
    </source>
</reference>
<reference key="7">
    <citation type="journal article" date="2013" name="Mol. Biol. Cell">
        <title>NuMA localization, stability, and function in spindle orientation involve 4.1 and Cdk1 interactions.</title>
        <authorList>
            <person name="Seldin L."/>
            <person name="Poulson N.D."/>
            <person name="Foote H.P."/>
            <person name="Lechler T."/>
        </authorList>
    </citation>
    <scope>FUNCTION</scope>
    <scope>PHOSPHORYLATION</scope>
    <scope>SUBCELLULAR LOCATION</scope>
</reference>
<reference key="8">
    <citation type="journal article" date="2013" name="Mol. Cell">
        <title>SIRT5-mediated lysine desuccinylation impacts diverse metabolic pathways.</title>
        <authorList>
            <person name="Park J."/>
            <person name="Chen Y."/>
            <person name="Tishkoff D.X."/>
            <person name="Peng C."/>
            <person name="Tan M."/>
            <person name="Dai L."/>
            <person name="Xie Z."/>
            <person name="Zhang Y."/>
            <person name="Zwaans B.M."/>
            <person name="Skinner M.E."/>
            <person name="Lombard D.B."/>
            <person name="Zhao Y."/>
        </authorList>
    </citation>
    <scope>ACETYLATION [LARGE SCALE ANALYSIS] AT LYS-443</scope>
    <scope>IDENTIFICATION BY MASS SPECTROMETRY [LARGE SCALE ANALYSIS]</scope>
    <source>
        <tissue>Embryonic fibroblast</tissue>
    </source>
</reference>
<reference key="9">
    <citation type="journal article" date="2015" name="Cell Stem Cell">
        <title>Filia Is an ESC-Specific Regulator of DNA Damage Response and Safeguards Genomic Stability.</title>
        <authorList>
            <person name="Zhao B."/>
            <person name="Zhang W.D."/>
            <person name="Duan Y.L."/>
            <person name="Lu Y.Q."/>
            <person name="Cun Y.X."/>
            <person name="Li C.H."/>
            <person name="Guo K."/>
            <person name="Nie W.H."/>
            <person name="Li L."/>
            <person name="Zhang R."/>
            <person name="Zheng P."/>
        </authorList>
    </citation>
    <scope>INTERACTION WITH KHDC3</scope>
</reference>
<reference key="10">
    <citation type="journal article" date="2016" name="Dev. Cell">
        <title>SAPCD2 controls spindle orientation and asymmetric divisions by negatively regulating the Galphai-LGN-NuMA ternary complex.</title>
        <authorList>
            <person name="Chiu C.W."/>
            <person name="Monat C."/>
            <person name="Robitaille M."/>
            <person name="Lacomme M."/>
            <person name="Daulat A.M."/>
            <person name="Macleod G."/>
            <person name="McNeill H."/>
            <person name="Cayouette M."/>
            <person name="Angers S."/>
        </authorList>
    </citation>
    <scope>SUBCELLULAR LOCATION</scope>
</reference>
<reference key="11">
    <citation type="journal article" date="2016" name="Elife">
        <title>NuMA-microtubule interactions are critical for spindle orientation and the morphogenesis of diverse epidermal structures.</title>
        <authorList>
            <person name="Seldin L."/>
            <person name="Muroyama A."/>
            <person name="Lechler T."/>
        </authorList>
    </citation>
    <scope>FUNCTION</scope>
    <scope>SUBCELLULAR LOCATION</scope>
    <scope>DISRUPTION PHENOTYPE</scope>
</reference>
<keyword id="KW-0007">Acetylation</keyword>
<keyword id="KW-0013">ADP-ribosylation</keyword>
<keyword id="KW-0131">Cell cycle</keyword>
<keyword id="KW-0132">Cell division</keyword>
<keyword id="KW-1003">Cell membrane</keyword>
<keyword id="KW-0158">Chromosome</keyword>
<keyword id="KW-0159">Chromosome partition</keyword>
<keyword id="KW-0175">Coiled coil</keyword>
<keyword id="KW-0963">Cytoplasm</keyword>
<keyword id="KW-0206">Cytoskeleton</keyword>
<keyword id="KW-0325">Glycoprotein</keyword>
<keyword id="KW-1017">Isopeptide bond</keyword>
<keyword id="KW-0446">Lipid-binding</keyword>
<keyword id="KW-0449">Lipoprotein</keyword>
<keyword id="KW-0472">Membrane</keyword>
<keyword id="KW-0493">Microtubule</keyword>
<keyword id="KW-0498">Mitosis</keyword>
<keyword id="KW-0539">Nucleus</keyword>
<keyword id="KW-0597">Phosphoprotein</keyword>
<keyword id="KW-1185">Reference proteome</keyword>
<keyword id="KW-0832">Ubl conjugation</keyword>
<name>NUMA1_MOUSE</name>
<protein>
    <recommendedName>
        <fullName evidence="1">Nuclear mitotic apparatus protein 1</fullName>
    </recommendedName>
    <alternativeName>
        <fullName evidence="1">Nuclear mitotic apparatus protein</fullName>
        <shortName evidence="1">NuMA protein</shortName>
    </alternativeName>
</protein>